<proteinExistence type="evidence at transcript level"/>
<comment type="function">
    <text evidence="1">Key enzyme in folate metabolism. Contributes to the de novo mitochondrial thymidylate biosynthesis pathway. Catalyzes an essential reaction for de novo glycine and purine synthesis, and for DNA precursor synthesis. Binds its own mRNA (By similarity).</text>
</comment>
<comment type="catalytic activity">
    <reaction evidence="2 3">
        <text>(6S)-5,6,7,8-tetrahydrofolate + NADP(+) = 7,8-dihydrofolate + NADPH + H(+)</text>
        <dbReference type="Rhea" id="RHEA:15009"/>
        <dbReference type="ChEBI" id="CHEBI:15378"/>
        <dbReference type="ChEBI" id="CHEBI:57451"/>
        <dbReference type="ChEBI" id="CHEBI:57453"/>
        <dbReference type="ChEBI" id="CHEBI:57783"/>
        <dbReference type="ChEBI" id="CHEBI:58349"/>
        <dbReference type="EC" id="1.5.1.3"/>
    </reaction>
</comment>
<comment type="pathway">
    <text>Cofactor biosynthesis; tetrahydrofolate biosynthesis; 5,6,7,8-tetrahydrofolate from 7,8-dihydrofolate: step 1/1.</text>
</comment>
<comment type="subunit">
    <text evidence="1">Homodimer.</text>
</comment>
<comment type="subcellular location">
    <subcellularLocation>
        <location evidence="2">Mitochondrion</location>
    </subcellularLocation>
    <subcellularLocation>
        <location evidence="2">Cytoplasm</location>
    </subcellularLocation>
</comment>
<comment type="polymorphism">
    <text evidence="4 5">The sequence shown is that of A3-35. The two clones A3-35 and MQ19-97 represent allelic forms. They differ in their drug sensitivities, possibly because of the difference at position 22.</text>
</comment>
<comment type="miscellaneous">
    <text evidence="7">Overexpression of the dihydrofolate gene (generally involving gene amplification) results in resistance to the antitumor antifolate drugs methotrexate (MTX) and methasquin.</text>
</comment>
<comment type="similarity">
    <text evidence="6">Belongs to the dihydrofolate reductase family.</text>
</comment>
<name>DYR_MESAU</name>
<gene>
    <name type="primary">DHFR</name>
</gene>
<reference key="1">
    <citation type="journal article" date="1988" name="J. Biol. Chem.">
        <title>Antifolate-resistant Chinese hamster cells. Molecular basis for the biochemical and structural heterogeneity among dihydrofolate reductases produced by drug-sensitive and drug-resistant cell lines.</title>
        <authorList>
            <person name="Melera P.W."/>
            <person name="Davide J.P."/>
            <person name="Oen H."/>
        </authorList>
    </citation>
    <scope>NUCLEOTIDE SEQUENCE [MRNA]</scope>
    <scope>VARIANTS LEU-23 AND ASN-96</scope>
</reference>
<reference key="2">
    <citation type="journal article" date="1984" name="Mol. Cell. Biol.">
        <title>Phenotypic expression in Escherichia coli and nucleotide sequence of two Chinese hamster lung cell cDNAs encoding different dihydrofolate reductases.</title>
        <authorList>
            <person name="Melera P.W."/>
            <person name="Davide J.P."/>
            <person name="Hession C.A."/>
            <person name="Scotto K.W."/>
        </authorList>
    </citation>
    <scope>NUCLEOTIDE SEQUENCE [MRNA]</scope>
    <source>
        <tissue>Lung fibroblast</tissue>
    </source>
</reference>
<reference key="3">
    <citation type="journal article" date="1984" name="Mol. Cell. Biol.">
        <authorList>
            <person name="Melera P.W."/>
            <person name="Davide J.P."/>
            <person name="Hession C.A."/>
            <person name="Scotto K.W."/>
        </authorList>
    </citation>
    <scope>ERRATUM OF PUBMED:6366511</scope>
</reference>
<protein>
    <recommendedName>
        <fullName>Dihydrofolate reductase</fullName>
        <ecNumber>1.5.1.3</ecNumber>
    </recommendedName>
</protein>
<organism>
    <name type="scientific">Mesocricetus auratus</name>
    <name type="common">Golden hamster</name>
    <dbReference type="NCBI Taxonomy" id="10036"/>
    <lineage>
        <taxon>Eukaryota</taxon>
        <taxon>Metazoa</taxon>
        <taxon>Chordata</taxon>
        <taxon>Craniata</taxon>
        <taxon>Vertebrata</taxon>
        <taxon>Euteleostomi</taxon>
        <taxon>Mammalia</taxon>
        <taxon>Eutheria</taxon>
        <taxon>Euarchontoglires</taxon>
        <taxon>Glires</taxon>
        <taxon>Rodentia</taxon>
        <taxon>Myomorpha</taxon>
        <taxon>Muroidea</taxon>
        <taxon>Cricetidae</taxon>
        <taxon>Cricetinae</taxon>
        <taxon>Mesocricetus</taxon>
    </lineage>
</organism>
<dbReference type="EC" id="1.5.1.3"/>
<dbReference type="EMBL" id="K01164">
    <property type="protein sequence ID" value="AAA36974.1"/>
    <property type="molecule type" value="mRNA"/>
</dbReference>
<dbReference type="EMBL" id="K01165">
    <property type="protein sequence ID" value="AAA36976.1"/>
    <property type="molecule type" value="mRNA"/>
</dbReference>
<dbReference type="EMBL" id="M19869">
    <property type="protein sequence ID" value="AAA36970.1"/>
    <property type="molecule type" value="mRNA"/>
</dbReference>
<dbReference type="PIR" id="S42445">
    <property type="entry name" value="S42445"/>
</dbReference>
<dbReference type="SMR" id="P04753"/>
<dbReference type="STRING" id="10036.ENSMAUP00000022862"/>
<dbReference type="KEGG" id="cge:100689028"/>
<dbReference type="eggNOG" id="KOG1324">
    <property type="taxonomic scope" value="Eukaryota"/>
</dbReference>
<dbReference type="UniPathway" id="UPA00077">
    <property type="reaction ID" value="UER00158"/>
</dbReference>
<dbReference type="Proteomes" id="UP000189706">
    <property type="component" value="Unplaced"/>
</dbReference>
<dbReference type="GO" id="GO:0005737">
    <property type="term" value="C:cytoplasm"/>
    <property type="evidence" value="ECO:0000250"/>
    <property type="project" value="UniProtKB"/>
</dbReference>
<dbReference type="GO" id="GO:0005739">
    <property type="term" value="C:mitochondrion"/>
    <property type="evidence" value="ECO:0000250"/>
    <property type="project" value="UniProtKB"/>
</dbReference>
<dbReference type="GO" id="GO:0004146">
    <property type="term" value="F:dihydrofolate reductase activity"/>
    <property type="evidence" value="ECO:0000250"/>
    <property type="project" value="UniProtKB"/>
</dbReference>
<dbReference type="GO" id="GO:0003729">
    <property type="term" value="F:mRNA binding"/>
    <property type="evidence" value="ECO:0000250"/>
    <property type="project" value="UniProtKB"/>
</dbReference>
<dbReference type="GO" id="GO:0050661">
    <property type="term" value="F:NADP binding"/>
    <property type="evidence" value="ECO:0007669"/>
    <property type="project" value="InterPro"/>
</dbReference>
<dbReference type="GO" id="GO:0046452">
    <property type="term" value="P:dihydrofolate metabolic process"/>
    <property type="evidence" value="ECO:0007669"/>
    <property type="project" value="TreeGrafter"/>
</dbReference>
<dbReference type="GO" id="GO:0046655">
    <property type="term" value="P:folic acid metabolic process"/>
    <property type="evidence" value="ECO:0007669"/>
    <property type="project" value="TreeGrafter"/>
</dbReference>
<dbReference type="GO" id="GO:0006730">
    <property type="term" value="P:one-carbon metabolic process"/>
    <property type="evidence" value="ECO:0007669"/>
    <property type="project" value="UniProtKB-KW"/>
</dbReference>
<dbReference type="GO" id="GO:0031427">
    <property type="term" value="P:response to methotrexate"/>
    <property type="evidence" value="ECO:0007669"/>
    <property type="project" value="UniProtKB-KW"/>
</dbReference>
<dbReference type="GO" id="GO:0046654">
    <property type="term" value="P:tetrahydrofolate biosynthetic process"/>
    <property type="evidence" value="ECO:0007669"/>
    <property type="project" value="UniProtKB-UniPathway"/>
</dbReference>
<dbReference type="GO" id="GO:0046653">
    <property type="term" value="P:tetrahydrofolate metabolic process"/>
    <property type="evidence" value="ECO:0000250"/>
    <property type="project" value="UniProtKB"/>
</dbReference>
<dbReference type="CDD" id="cd00209">
    <property type="entry name" value="DHFR"/>
    <property type="match status" value="1"/>
</dbReference>
<dbReference type="FunFam" id="3.40.430.10:FF:000002">
    <property type="entry name" value="Dihydrofolate reductase"/>
    <property type="match status" value="1"/>
</dbReference>
<dbReference type="Gene3D" id="3.40.430.10">
    <property type="entry name" value="Dihydrofolate Reductase, subunit A"/>
    <property type="match status" value="1"/>
</dbReference>
<dbReference type="InterPro" id="IPR012259">
    <property type="entry name" value="DHFR"/>
</dbReference>
<dbReference type="InterPro" id="IPR024072">
    <property type="entry name" value="DHFR-like_dom_sf"/>
</dbReference>
<dbReference type="InterPro" id="IPR017925">
    <property type="entry name" value="DHFR_CS"/>
</dbReference>
<dbReference type="InterPro" id="IPR001796">
    <property type="entry name" value="DHFR_dom"/>
</dbReference>
<dbReference type="PANTHER" id="PTHR48069">
    <property type="entry name" value="DIHYDROFOLATE REDUCTASE"/>
    <property type="match status" value="1"/>
</dbReference>
<dbReference type="PANTHER" id="PTHR48069:SF6">
    <property type="entry name" value="DIHYDROFOLATE REDUCTASE"/>
    <property type="match status" value="1"/>
</dbReference>
<dbReference type="Pfam" id="PF00186">
    <property type="entry name" value="DHFR_1"/>
    <property type="match status" value="1"/>
</dbReference>
<dbReference type="PRINTS" id="PR00070">
    <property type="entry name" value="DHFR"/>
</dbReference>
<dbReference type="SUPFAM" id="SSF53597">
    <property type="entry name" value="Dihydrofolate reductase-like"/>
    <property type="match status" value="1"/>
</dbReference>
<dbReference type="PROSITE" id="PS00075">
    <property type="entry name" value="DHFR_1"/>
    <property type="match status" value="1"/>
</dbReference>
<dbReference type="PROSITE" id="PS51330">
    <property type="entry name" value="DHFR_2"/>
    <property type="match status" value="1"/>
</dbReference>
<sequence length="187" mass="21660">MVRPLNCIVAVSQNMGIGKNGDFPWPMLRNEFKYFQRMTTTSSVEGKQNLVIMGRKTWFSIPEKNRPLKDRINIVLSRELKEPPQGAHFLAKSLDDALKLIEQPELADKVDMVWIVGGSSVYKEAMNQPGHLRLFVTRIMQEFESDTFFPEIDLEKYKLLPEYPGVLSEVQEEKGIKYKFEVYEKKG</sequence>
<evidence type="ECO:0000250" key="1">
    <source>
        <dbReference type="UniProtKB" id="P00374"/>
    </source>
</evidence>
<evidence type="ECO:0000250" key="2">
    <source>
        <dbReference type="UniProtKB" id="P00375"/>
    </source>
</evidence>
<evidence type="ECO:0000255" key="3">
    <source>
        <dbReference type="PROSITE-ProRule" id="PRU00660"/>
    </source>
</evidence>
<evidence type="ECO:0000269" key="4">
    <source>
    </source>
</evidence>
<evidence type="ECO:0000269" key="5">
    <source>
    </source>
</evidence>
<evidence type="ECO:0000305" key="6"/>
<evidence type="ECO:0000305" key="7">
    <source>
    </source>
</evidence>
<accession>P04753</accession>
<feature type="chain" id="PRO_0000186363" description="Dihydrofolate reductase">
    <location>
        <begin position="1"/>
        <end position="187"/>
    </location>
</feature>
<feature type="domain" description="DHFR" evidence="3">
    <location>
        <begin position="4"/>
        <end position="185"/>
    </location>
</feature>
<feature type="region of interest" description="Involved in methotrexate binding" evidence="6">
    <location>
        <begin position="8"/>
        <end position="37"/>
    </location>
</feature>
<feature type="region of interest" description="Involved in methotrexate binding" evidence="6">
    <location>
        <begin position="60"/>
        <end position="70"/>
    </location>
</feature>
<feature type="binding site" evidence="1">
    <location>
        <position position="10"/>
    </location>
    <ligand>
        <name>NADP(+)</name>
        <dbReference type="ChEBI" id="CHEBI:58349"/>
    </ligand>
</feature>
<feature type="binding site" evidence="1">
    <location>
        <begin position="16"/>
        <end position="22"/>
    </location>
    <ligand>
        <name>NADP(+)</name>
        <dbReference type="ChEBI" id="CHEBI:58349"/>
    </ligand>
</feature>
<feature type="binding site" evidence="1">
    <location>
        <begin position="31"/>
        <end position="36"/>
    </location>
    <ligand>
        <name>substrate</name>
    </ligand>
</feature>
<feature type="binding site" evidence="1">
    <location>
        <begin position="55"/>
        <end position="57"/>
    </location>
    <ligand>
        <name>NADP(+)</name>
        <dbReference type="ChEBI" id="CHEBI:58349"/>
    </ligand>
</feature>
<feature type="binding site" evidence="1">
    <location>
        <position position="71"/>
    </location>
    <ligand>
        <name>substrate</name>
    </ligand>
</feature>
<feature type="binding site" evidence="1">
    <location>
        <begin position="77"/>
        <end position="79"/>
    </location>
    <ligand>
        <name>NADP(+)</name>
        <dbReference type="ChEBI" id="CHEBI:58349"/>
    </ligand>
</feature>
<feature type="binding site" evidence="1">
    <location>
        <begin position="117"/>
        <end position="124"/>
    </location>
    <ligand>
        <name>NADP(+)</name>
        <dbReference type="ChEBI" id="CHEBI:58349"/>
    </ligand>
</feature>
<feature type="binding site" evidence="6">
    <location>
        <position position="137"/>
    </location>
    <ligand>
        <name>methotrexate</name>
        <dbReference type="ChEBI" id="CHEBI:50681"/>
    </ligand>
</feature>
<feature type="modified residue" description="N6-acetyllysine; alternate" evidence="2">
    <location>
        <position position="33"/>
    </location>
</feature>
<feature type="modified residue" description="N6-succinyllysine; alternate" evidence="2">
    <location>
        <position position="33"/>
    </location>
</feature>
<feature type="sequence variant" description="In MQ19-97." evidence="4">
    <original>F</original>
    <variation>L</variation>
    <location>
        <position position="23"/>
    </location>
</feature>
<feature type="sequence variant" description="In MQ19-97." evidence="4">
    <original>D</original>
    <variation>N</variation>
    <location>
        <position position="96"/>
    </location>
</feature>
<keyword id="KW-0007">Acetylation</keyword>
<keyword id="KW-0963">Cytoplasm</keyword>
<keyword id="KW-0487">Methotrexate resistance</keyword>
<keyword id="KW-0496">Mitochondrion</keyword>
<keyword id="KW-0521">NADP</keyword>
<keyword id="KW-0554">One-carbon metabolism</keyword>
<keyword id="KW-0560">Oxidoreductase</keyword>
<keyword id="KW-1185">Reference proteome</keyword>
<keyword id="KW-0694">RNA-binding</keyword>